<dbReference type="EMBL" id="CP000950">
    <property type="protein sequence ID" value="ACA67158.1"/>
    <property type="molecule type" value="Genomic_DNA"/>
</dbReference>
<dbReference type="RefSeq" id="WP_002209958.1">
    <property type="nucleotide sequence ID" value="NZ_CP009792.1"/>
</dbReference>
<dbReference type="SMR" id="B1JNR6"/>
<dbReference type="KEGG" id="ypy:YPK_0857"/>
<dbReference type="PATRIC" id="fig|502800.11.peg.1482"/>
<dbReference type="GO" id="GO:0003677">
    <property type="term" value="F:DNA binding"/>
    <property type="evidence" value="ECO:0007669"/>
    <property type="project" value="UniProtKB-UniRule"/>
</dbReference>
<dbReference type="GO" id="GO:0003700">
    <property type="term" value="F:DNA-binding transcription factor activity"/>
    <property type="evidence" value="ECO:0007669"/>
    <property type="project" value="UniProtKB-UniRule"/>
</dbReference>
<dbReference type="CDD" id="cd08428">
    <property type="entry name" value="PBP2_IciA_ArgP"/>
    <property type="match status" value="1"/>
</dbReference>
<dbReference type="FunFam" id="1.10.10.10:FF:000061">
    <property type="entry name" value="HTH-type transcriptional regulator ArgP"/>
    <property type="match status" value="1"/>
</dbReference>
<dbReference type="FunFam" id="3.40.190.290:FF:000002">
    <property type="entry name" value="HTH-type transcriptional regulator ArgP"/>
    <property type="match status" value="1"/>
</dbReference>
<dbReference type="Gene3D" id="3.40.190.290">
    <property type="match status" value="1"/>
</dbReference>
<dbReference type="Gene3D" id="1.10.10.10">
    <property type="entry name" value="Winged helix-like DNA-binding domain superfamily/Winged helix DNA-binding domain"/>
    <property type="match status" value="1"/>
</dbReference>
<dbReference type="HAMAP" id="MF_00513">
    <property type="entry name" value="HTH_type_ArgP"/>
    <property type="match status" value="1"/>
</dbReference>
<dbReference type="InterPro" id="IPR017685">
    <property type="entry name" value="ArgP"/>
</dbReference>
<dbReference type="InterPro" id="IPR023490">
    <property type="entry name" value="ArgP_gammaproteobact"/>
</dbReference>
<dbReference type="InterPro" id="IPR050176">
    <property type="entry name" value="LTTR"/>
</dbReference>
<dbReference type="InterPro" id="IPR005119">
    <property type="entry name" value="LysR_subst-bd"/>
</dbReference>
<dbReference type="InterPro" id="IPR000847">
    <property type="entry name" value="Tscrpt_reg_HTH_LysR"/>
</dbReference>
<dbReference type="InterPro" id="IPR036388">
    <property type="entry name" value="WH-like_DNA-bd_sf"/>
</dbReference>
<dbReference type="InterPro" id="IPR036390">
    <property type="entry name" value="WH_DNA-bd_sf"/>
</dbReference>
<dbReference type="NCBIfam" id="TIGR03298">
    <property type="entry name" value="argP"/>
    <property type="match status" value="1"/>
</dbReference>
<dbReference type="NCBIfam" id="NF002964">
    <property type="entry name" value="PRK03635.1"/>
    <property type="match status" value="1"/>
</dbReference>
<dbReference type="NCBIfam" id="NF009888">
    <property type="entry name" value="PRK13348.1"/>
    <property type="match status" value="1"/>
</dbReference>
<dbReference type="PANTHER" id="PTHR30579:SF2">
    <property type="entry name" value="HTH-TYPE TRANSCRIPTIONAL REGULATOR ARGP"/>
    <property type="match status" value="1"/>
</dbReference>
<dbReference type="PANTHER" id="PTHR30579">
    <property type="entry name" value="TRANSCRIPTIONAL REGULATOR"/>
    <property type="match status" value="1"/>
</dbReference>
<dbReference type="Pfam" id="PF00126">
    <property type="entry name" value="HTH_1"/>
    <property type="match status" value="1"/>
</dbReference>
<dbReference type="Pfam" id="PF03466">
    <property type="entry name" value="LysR_substrate"/>
    <property type="match status" value="1"/>
</dbReference>
<dbReference type="PRINTS" id="PR00039">
    <property type="entry name" value="HTHLYSR"/>
</dbReference>
<dbReference type="SUPFAM" id="SSF53850">
    <property type="entry name" value="Periplasmic binding protein-like II"/>
    <property type="match status" value="1"/>
</dbReference>
<dbReference type="SUPFAM" id="SSF46785">
    <property type="entry name" value="Winged helix' DNA-binding domain"/>
    <property type="match status" value="1"/>
</dbReference>
<dbReference type="PROSITE" id="PS50931">
    <property type="entry name" value="HTH_LYSR"/>
    <property type="match status" value="1"/>
</dbReference>
<proteinExistence type="inferred from homology"/>
<name>ARGP_YERPY</name>
<sequence>MKRPDYRTLQALDAVIRERGFERAAQKLCITQSAVSQRIKQLENLFGQPLLVRTVPPRPTEQGQKLLALLHQVELLEEEWLGNDNGVDTPLLLSLAVNADSLATWLLPALKPVLADLPIRLNLQVEDETRTQERLRRGEVVGAVSIQPQPLPSCLVDQLGALDYLFVASKAFAERYFPNGVTRSALLKAPAVAFDHLDDMHQAFLQQNFDLSPGSVPCHIVNSSEAFVQLARQGTTCCMIPHLQIEKELASGELIDLTPGLLQRRMLFWHRFAPESRTMRKVTDALLSYGRQVLRQDSFIGQ</sequence>
<keyword id="KW-0238">DNA-binding</keyword>
<keyword id="KW-0804">Transcription</keyword>
<keyword id="KW-0805">Transcription regulation</keyword>
<feature type="chain" id="PRO_1000127289" description="HTH-type transcriptional regulator ArgP">
    <location>
        <begin position="1"/>
        <end position="302"/>
    </location>
</feature>
<feature type="domain" description="HTH lysR-type" evidence="1">
    <location>
        <begin position="4"/>
        <end position="60"/>
    </location>
</feature>
<feature type="DNA-binding region" description="H-T-H motif" evidence="1">
    <location>
        <begin position="21"/>
        <end position="40"/>
    </location>
</feature>
<evidence type="ECO:0000255" key="1">
    <source>
        <dbReference type="HAMAP-Rule" id="MF_00513"/>
    </source>
</evidence>
<evidence type="ECO:0000305" key="2"/>
<accession>B1JNR6</accession>
<reference key="1">
    <citation type="submission" date="2008-02" db="EMBL/GenBank/DDBJ databases">
        <title>Complete sequence of Yersinia pseudotuberculosis YPIII.</title>
        <authorList>
            <consortium name="US DOE Joint Genome Institute"/>
            <person name="Copeland A."/>
            <person name="Lucas S."/>
            <person name="Lapidus A."/>
            <person name="Glavina del Rio T."/>
            <person name="Dalin E."/>
            <person name="Tice H."/>
            <person name="Bruce D."/>
            <person name="Goodwin L."/>
            <person name="Pitluck S."/>
            <person name="Munk A.C."/>
            <person name="Brettin T."/>
            <person name="Detter J.C."/>
            <person name="Han C."/>
            <person name="Tapia R."/>
            <person name="Schmutz J."/>
            <person name="Larimer F."/>
            <person name="Land M."/>
            <person name="Hauser L."/>
            <person name="Challacombe J.F."/>
            <person name="Green L."/>
            <person name="Lindler L.E."/>
            <person name="Nikolich M.P."/>
            <person name="Richardson P."/>
        </authorList>
    </citation>
    <scope>NUCLEOTIDE SEQUENCE [LARGE SCALE GENOMIC DNA]</scope>
    <source>
        <strain>YPIII</strain>
    </source>
</reference>
<gene>
    <name evidence="1" type="primary">argP</name>
    <name type="synonym">iciA</name>
    <name type="ordered locus">YPK_0857</name>
</gene>
<protein>
    <recommendedName>
        <fullName evidence="1">HTH-type transcriptional regulator ArgP</fullName>
    </recommendedName>
</protein>
<organism>
    <name type="scientific">Yersinia pseudotuberculosis serotype O:3 (strain YPIII)</name>
    <dbReference type="NCBI Taxonomy" id="502800"/>
    <lineage>
        <taxon>Bacteria</taxon>
        <taxon>Pseudomonadati</taxon>
        <taxon>Pseudomonadota</taxon>
        <taxon>Gammaproteobacteria</taxon>
        <taxon>Enterobacterales</taxon>
        <taxon>Yersiniaceae</taxon>
        <taxon>Yersinia</taxon>
    </lineage>
</organism>
<comment type="function">
    <text evidence="1">Controls the transcription of genes involved in arginine and lysine metabolism.</text>
</comment>
<comment type="subunit">
    <text evidence="1">Homodimer.</text>
</comment>
<comment type="similarity">
    <text evidence="2">Belongs to the LysR transcriptional regulatory family.</text>
</comment>